<name>NROR_CLOAB</name>
<organism>
    <name type="scientific">Clostridium acetobutylicum (strain ATCC 824 / DSM 792 / JCM 1419 / IAM 19013 / LMG 5710 / NBRC 13948 / NRRL B-527 / VKM B-1787 / 2291 / W)</name>
    <dbReference type="NCBI Taxonomy" id="272562"/>
    <lineage>
        <taxon>Bacteria</taxon>
        <taxon>Bacillati</taxon>
        <taxon>Bacillota</taxon>
        <taxon>Clostridia</taxon>
        <taxon>Eubacteriales</taxon>
        <taxon>Clostridiaceae</taxon>
        <taxon>Clostridium</taxon>
    </lineage>
</organism>
<evidence type="ECO:0000269" key="1">
    <source>
    </source>
</evidence>
<evidence type="ECO:0000269" key="2">
    <source>
    </source>
</evidence>
<evidence type="ECO:0000269" key="3">
    <source>
    </source>
</evidence>
<evidence type="ECO:0000269" key="4">
    <source>
    </source>
</evidence>
<evidence type="ECO:0000269" key="5">
    <source>
    </source>
</evidence>
<evidence type="ECO:0000269" key="6">
    <source>
    </source>
</evidence>
<evidence type="ECO:0000269" key="7">
    <source>
    </source>
</evidence>
<evidence type="ECO:0000305" key="8"/>
<evidence type="ECO:0007829" key="9">
    <source>
        <dbReference type="PDB" id="3KLJ"/>
    </source>
</evidence>
<gene>
    <name type="primary">nroR</name>
    <name type="ordered locus">CA_C2448</name>
</gene>
<accession>Q9AL95</accession>
<reference key="1">
    <citation type="journal article" date="2001" name="Biochem. Biophys. Res. Commun.">
        <title>Identification of the gene encoding NADH-rubredoxin oxidoreductase in Clostridium acetobutylicum.</title>
        <authorList>
            <person name="Guedon E."/>
            <person name="Petitdemange H."/>
        </authorList>
    </citation>
    <scope>NUCLEOTIDE SEQUENCE [GENOMIC DNA]</scope>
    <scope>PROTEIN SEQUENCE OF 1-20</scope>
    <scope>FUNCTION AS NROR</scope>
    <scope>SUBSTRATE SPECIFICITY</scope>
    <scope>CATALYTIC ACTIVITY</scope>
    <scope>COFACTOR</scope>
    <scope>KINETIC PARAMETERS</scope>
    <source>
        <strain>ATCC 824 / DSM 792 / JCM 1419 / IAM 19013 / LMG 5710 / NBRC 13948 / NRRL B-527 / VKM B-1787 / 2291 / W</strain>
    </source>
</reference>
<reference key="2">
    <citation type="journal article" date="2001" name="J. Bacteriol.">
        <title>Genome sequence and comparative analysis of the solvent-producing bacterium Clostridium acetobutylicum.</title>
        <authorList>
            <person name="Noelling J."/>
            <person name="Breton G."/>
            <person name="Omelchenko M.V."/>
            <person name="Makarova K.S."/>
            <person name="Zeng Q."/>
            <person name="Gibson R."/>
            <person name="Lee H.M."/>
            <person name="Dubois J."/>
            <person name="Qiu D."/>
            <person name="Hitti J."/>
            <person name="Wolf Y.I."/>
            <person name="Tatusov R.L."/>
            <person name="Sabathe F."/>
            <person name="Doucette-Stamm L.A."/>
            <person name="Soucaille P."/>
            <person name="Daly M.J."/>
            <person name="Bennett G.N."/>
            <person name="Koonin E.V."/>
            <person name="Smith D.R."/>
        </authorList>
    </citation>
    <scope>NUCLEOTIDE SEQUENCE [LARGE SCALE GENOMIC DNA]</scope>
    <source>
        <strain>ATCC 824 / DSM 792 / JCM 1419 / IAM 19013 / LMG 5710 / NBRC 13948 / NRRL B-527 / VKM B-1787 / 2291 / W</strain>
    </source>
</reference>
<reference key="3">
    <citation type="journal article" date="2009" name="Appl. Environ. Microbiol.">
        <title>O2 and reactive oxygen species detoxification complex, composed of O2-responsive NADH:rubredoxin oxidoreductase-flavoprotein A2-desulfoferrodoxin operon enzymes, rubperoxin, and rubredoxin, in Clostridium acetobutylicum.</title>
        <authorList>
            <person name="Kawasaki S."/>
            <person name="Sakai Y."/>
            <person name="Takahashi T."/>
            <person name="Suzuki I."/>
            <person name="Niimura Y."/>
        </authorList>
    </citation>
    <scope>PROTEIN SEQUENCE OF 1-20</scope>
    <scope>FUNCTION</scope>
    <source>
        <strain>ATCC 824 / DSM 792 / JCM 1419 / IAM 19013 / LMG 5710 / NBRC 13948 / NRRL B-527 / VKM B-1787 / 2291 / W</strain>
    </source>
</reference>
<reference key="4">
    <citation type="journal article" date="2005" name="Appl. Environ. Microbiol.">
        <title>Adaptive responses to oxygen stress in obligatory anaerobes Clostridium acetobutylicum and Clostridium aminovalericum.</title>
        <authorList>
            <person name="Kawasaki S."/>
            <person name="Watamura Y."/>
            <person name="Ono M."/>
            <person name="Watanabe T."/>
            <person name="Takeda K."/>
            <person name="Niimura Y."/>
        </authorList>
    </citation>
    <scope>INDUCTION BY O(2)</scope>
    <source>
        <strain>ATCC 824 / DSM 792 / JCM 1419 / IAM 19013 / LMG 5710 / NBRC 13948 / NRRL B-527 / VKM B-1787 / 2291 / W</strain>
    </source>
</reference>
<reference key="5">
    <citation type="journal article" date="2009" name="FEBS Lett.">
        <title>Reductive dioxygen scavenging by flavo-diiron proteins of Clostridium acetobutylicum.</title>
        <authorList>
            <person name="Hillmann F."/>
            <person name="Riebe O."/>
            <person name="Fischer R.J."/>
            <person name="Mot A."/>
            <person name="Caranto J.D."/>
            <person name="Kurtz D.M. Jr."/>
            <person name="Bahl H."/>
        </authorList>
    </citation>
    <scope>FUNCTION</scope>
    <source>
        <strain>ATCC 824 / DSM 792 / JCM 1419 / IAM 19013 / LMG 5710 / NBRC 13948 / NRRL B-527 / VKM B-1787 / 2291 / W</strain>
    </source>
</reference>
<reference key="6">
    <citation type="journal article" date="2009" name="J. Bacteriol.">
        <title>The role of PerR in O2-affected gene expression of Clostridium acetobutylicum.</title>
        <authorList>
            <person name="Hillmann F."/>
            <person name="Doring C."/>
            <person name="Riebe O."/>
            <person name="Ehrenreich A."/>
            <person name="Fischer R.J."/>
            <person name="Bahl H."/>
        </authorList>
    </citation>
    <scope>INDUCTION BY O(2)</scope>
    <scope>REPRESSION BY PERR</scope>
    <source>
        <strain>ATCC 824 / DSM 792 / JCM 1419 / IAM 19013 / LMG 5710 / NBRC 13948 / NRRL B-527 / VKM B-1787 / 2291 / W</strain>
    </source>
</reference>
<reference key="7">
    <citation type="journal article" date="2009" name="Microbiology">
        <title>Pathway for H2O2 and O2 detoxification in Clostridium acetobutylicum.</title>
        <authorList>
            <person name="Riebe O."/>
            <person name="Fischer R.J."/>
            <person name="Wampler D.A."/>
            <person name="Kurtz D.M. Jr."/>
            <person name="Bahl H."/>
        </authorList>
    </citation>
    <scope>FUNCTION</scope>
    <scope>COFACTOR</scope>
    <source>
        <strain>ATCC 824 / DSM 792 / JCM 1419 / IAM 19013 / LMG 5710 / NBRC 13948 / NRRL B-527 / VKM B-1787 / 2291 / W</strain>
    </source>
</reference>
<reference key="8">
    <citation type="journal article" date="2010" name="Proteins">
        <title>Crystal structure of NADH:rubredoxin oxidoreductase from Clostridium acetobutylicum: a key component of the dioxygen scavenging system in obligatory anaerobes.</title>
        <authorList>
            <person name="Nishikawa K."/>
            <person name="Shomura Y."/>
            <person name="Kawasaki S."/>
            <person name="Niimura Y."/>
            <person name="Higuchi Y."/>
        </authorList>
    </citation>
    <scope>X-RAY CRYSTALLOGRAPHY (2.1 ANGSTROMS) OF 2-379 IN COMPLEX WITH FAD</scope>
    <scope>COFACTOR</scope>
    <scope>DISULFIDE BONDS</scope>
    <scope>SUBUNIT</scope>
    <scope>DOMAIN</scope>
    <source>
        <strain>ATCC 824 / DSM 792 / JCM 1419 / IAM 19013 / LMG 5710 / NBRC 13948 / NRRL B-527 / VKM B-1787 / 2291 / W</strain>
    </source>
</reference>
<comment type="function">
    <text evidence="1 3 4 5">Catalyzes the NADH-dependent reduction of rubredoxin (Rd). NADPH is a very poor electron donor compared to NADH. Functions as an intermediate component in the electron transfer chain: NADH-&gt;NROR-&gt;Rd-&gt;FprA1/2. Also functions as an intermediate component in the electron transfer chains from NADH to revRbr and Dfx. Therefore, is a key electron carrier in an efficient multienzyme complex that can scavenge O(2) and reactive oxygen species (ROS), and thus plays an important role in the oxidative stress defense system in C.acetobutylicum, an obligate anaerobic bacterium.</text>
</comment>
<comment type="catalytic activity">
    <reaction evidence="1">
        <text>2 reduced [rubredoxin] + NAD(+) + H(+) = 2 oxidized [rubredoxin] + NADH</text>
        <dbReference type="Rhea" id="RHEA:18597"/>
        <dbReference type="Rhea" id="RHEA-COMP:10302"/>
        <dbReference type="Rhea" id="RHEA-COMP:10303"/>
        <dbReference type="ChEBI" id="CHEBI:15378"/>
        <dbReference type="ChEBI" id="CHEBI:29033"/>
        <dbReference type="ChEBI" id="CHEBI:29034"/>
        <dbReference type="ChEBI" id="CHEBI:57540"/>
        <dbReference type="ChEBI" id="CHEBI:57945"/>
        <dbReference type="EC" id="1.18.1.1"/>
    </reaction>
</comment>
<comment type="cofactor">
    <cofactor evidence="1 4 7">
        <name>FAD</name>
        <dbReference type="ChEBI" id="CHEBI:57692"/>
    </cofactor>
    <text evidence="1 4 7">Binds 1 FAD per subunit.</text>
</comment>
<comment type="biophysicochemical properties">
    <kinetics>
        <KM evidence="1">1 uM for rubredoxin</KM>
        <KM evidence="1">17.4 uM for NADH</KM>
        <KM evidence="1">2070 uM for NADPH</KM>
        <Vmax evidence="1">570.0 umol/min/mg enzyme with rubredoxin and NADH as substrates</Vmax>
    </kinetics>
</comment>
<comment type="subunit">
    <text evidence="7">Monomer.</text>
</comment>
<comment type="induction">
    <text evidence="2 6">Up-regulated upon exposure to O(2). Repressed by PerR.</text>
</comment>
<comment type="domain">
    <text evidence="7">Is composed of three domains: an FAD-binding domain (residues 2-107 and 223-297), an NADH-binding domain (residues 108-222), and a C-terminal domain (residues 298-379).</text>
</comment>
<comment type="miscellaneous">
    <text>The disulfide bonds are not involved in the electron transfer from NADH to rubredoxin catalyzed by NROR.</text>
</comment>
<comment type="similarity">
    <text evidence="8">Belongs to the FAD-dependent oxidoreductase family.</text>
</comment>
<sequence>MKSTKILILGAGPAGFSAAKAALGKCDDITMINSEKYLPYYRPRLNEIIAKNKSIDDILIKKNDWYEKNNIKVITSEFATSIDPNNKLVTLKSGEKIKYEKLIIASGSIANKIKVPHADEIFSLYSYDDALKIKDECKNKGKAFIIGGGILGIELAQAIIDSGTPASIGIILEYPLERQLDRDGGLFLKDKLDRLGIKIYTNSNFEEMGDLIRSSCVITAVGVKPNLDFIKDTEIASKRGILVNDHMETSIKDIYACGDVAEFYGKNPGLINIANKQGEVAGLNACGEDASYSEIIPSPILKVSGISIISCGDIENNKPSKVFRSTQEDKYIVCMLKENKIDAAAVIGDVSLGTKLKKAIDSSKSFDNISSLDAILNNL</sequence>
<proteinExistence type="evidence at protein level"/>
<dbReference type="EC" id="1.18.1.1"/>
<dbReference type="EMBL" id="AY026492">
    <property type="protein sequence ID" value="AAK08126.1"/>
    <property type="molecule type" value="Genomic_DNA"/>
</dbReference>
<dbReference type="EMBL" id="AE001437">
    <property type="protein sequence ID" value="AAK80402.1"/>
    <property type="molecule type" value="Genomic_DNA"/>
</dbReference>
<dbReference type="PIR" id="G97201">
    <property type="entry name" value="G97201"/>
</dbReference>
<dbReference type="PIR" id="JC7710">
    <property type="entry name" value="JC7710"/>
</dbReference>
<dbReference type="RefSeq" id="NP_349062.1">
    <property type="nucleotide sequence ID" value="NC_003030.1"/>
</dbReference>
<dbReference type="RefSeq" id="WP_010965743.1">
    <property type="nucleotide sequence ID" value="NC_003030.1"/>
</dbReference>
<dbReference type="PDB" id="3KLJ">
    <property type="method" value="X-ray"/>
    <property type="resolution" value="2.10 A"/>
    <property type="chains" value="A=2-379"/>
</dbReference>
<dbReference type="PDBsum" id="3KLJ"/>
<dbReference type="SMR" id="Q9AL95"/>
<dbReference type="STRING" id="272562.CA_C2448"/>
<dbReference type="GeneID" id="44998926"/>
<dbReference type="KEGG" id="cac:CA_C2448"/>
<dbReference type="PATRIC" id="fig|272562.8.peg.2644"/>
<dbReference type="eggNOG" id="COG1251">
    <property type="taxonomic scope" value="Bacteria"/>
</dbReference>
<dbReference type="HOGENOM" id="CLU_003291_4_4_9"/>
<dbReference type="OrthoDB" id="9807946at2"/>
<dbReference type="BRENDA" id="1.18.1.1">
    <property type="organism ID" value="1452"/>
</dbReference>
<dbReference type="SABIO-RK" id="Q9AL95"/>
<dbReference type="EvolutionaryTrace" id="Q9AL95"/>
<dbReference type="Proteomes" id="UP000000814">
    <property type="component" value="Chromosome"/>
</dbReference>
<dbReference type="GO" id="GO:0009055">
    <property type="term" value="F:electron transfer activity"/>
    <property type="evidence" value="ECO:0000314"/>
    <property type="project" value="UniProtKB"/>
</dbReference>
<dbReference type="GO" id="GO:0050660">
    <property type="term" value="F:flavin adenine dinucleotide binding"/>
    <property type="evidence" value="ECO:0000314"/>
    <property type="project" value="UniProtKB"/>
</dbReference>
<dbReference type="GO" id="GO:0015044">
    <property type="term" value="F:rubredoxin-NAD+ reductase activity"/>
    <property type="evidence" value="ECO:0000314"/>
    <property type="project" value="UniProtKB"/>
</dbReference>
<dbReference type="GO" id="GO:0072592">
    <property type="term" value="P:oxygen metabolic process"/>
    <property type="evidence" value="ECO:0000314"/>
    <property type="project" value="UniProtKB"/>
</dbReference>
<dbReference type="GO" id="GO:0009636">
    <property type="term" value="P:response to toxic substance"/>
    <property type="evidence" value="ECO:0007669"/>
    <property type="project" value="UniProtKB-KW"/>
</dbReference>
<dbReference type="Gene3D" id="3.30.390.30">
    <property type="match status" value="1"/>
</dbReference>
<dbReference type="Gene3D" id="3.50.50.60">
    <property type="entry name" value="FAD/NAD(P)-binding domain"/>
    <property type="match status" value="2"/>
</dbReference>
<dbReference type="InterPro" id="IPR050260">
    <property type="entry name" value="FAD-bd_OxRdtase"/>
</dbReference>
<dbReference type="InterPro" id="IPR036188">
    <property type="entry name" value="FAD/NAD-bd_sf"/>
</dbReference>
<dbReference type="InterPro" id="IPR023753">
    <property type="entry name" value="FAD/NAD-binding_dom"/>
</dbReference>
<dbReference type="InterPro" id="IPR016156">
    <property type="entry name" value="FAD/NAD-linked_Rdtase_dimer_sf"/>
</dbReference>
<dbReference type="InterPro" id="IPR041575">
    <property type="entry name" value="Rubredoxin_C"/>
</dbReference>
<dbReference type="PANTHER" id="PTHR43429:SF3">
    <property type="entry name" value="NITRITE REDUCTASE [NAD(P)H]"/>
    <property type="match status" value="1"/>
</dbReference>
<dbReference type="PANTHER" id="PTHR43429">
    <property type="entry name" value="PYRIDINE NUCLEOTIDE-DISULFIDE OXIDOREDUCTASE DOMAIN-CONTAINING"/>
    <property type="match status" value="1"/>
</dbReference>
<dbReference type="Pfam" id="PF07992">
    <property type="entry name" value="Pyr_redox_2"/>
    <property type="match status" value="1"/>
</dbReference>
<dbReference type="Pfam" id="PF18267">
    <property type="entry name" value="Rubredoxin_C"/>
    <property type="match status" value="1"/>
</dbReference>
<dbReference type="PRINTS" id="PR00368">
    <property type="entry name" value="FADPNR"/>
</dbReference>
<dbReference type="PRINTS" id="PR00469">
    <property type="entry name" value="PNDRDTASEII"/>
</dbReference>
<dbReference type="SUPFAM" id="SSF51905">
    <property type="entry name" value="FAD/NAD(P)-binding domain"/>
    <property type="match status" value="2"/>
</dbReference>
<protein>
    <recommendedName>
        <fullName>NADH-rubredoxin oxidoreductase</fullName>
        <shortName>NROR</shortName>
        <ecNumber>1.18.1.1</ecNumber>
    </recommendedName>
    <alternativeName>
        <fullName>NADH:rubredoxin oxidoreductase</fullName>
    </alternativeName>
</protein>
<feature type="chain" id="PRO_0000405536" description="NADH-rubredoxin oxidoreductase">
    <location>
        <begin position="1"/>
        <end position="379"/>
    </location>
</feature>
<feature type="binding site" evidence="7">
    <location>
        <begin position="33"/>
        <end position="35"/>
    </location>
    <ligand>
        <name>FAD</name>
        <dbReference type="ChEBI" id="CHEBI:57692"/>
    </ligand>
</feature>
<feature type="binding site" evidence="7">
    <location>
        <position position="42"/>
    </location>
    <ligand>
        <name>FAD</name>
        <dbReference type="ChEBI" id="CHEBI:57692"/>
    </ligand>
</feature>
<feature type="binding site" evidence="7">
    <location>
        <position position="79"/>
    </location>
    <ligand>
        <name>FAD</name>
        <dbReference type="ChEBI" id="CHEBI:57692"/>
    </ligand>
</feature>
<feature type="binding site" evidence="7">
    <location>
        <position position="125"/>
    </location>
    <ligand>
        <name>FAD</name>
        <dbReference type="ChEBI" id="CHEBI:57692"/>
    </ligand>
</feature>
<feature type="binding site" evidence="7">
    <location>
        <position position="259"/>
    </location>
    <ligand>
        <name>FAD</name>
        <dbReference type="ChEBI" id="CHEBI:57692"/>
    </ligand>
</feature>
<feature type="disulfide bond" evidence="7">
    <location>
        <begin position="26"/>
        <end position="286"/>
    </location>
</feature>
<feature type="disulfide bond" evidence="7">
    <location>
        <begin position="137"/>
        <end position="216"/>
    </location>
</feature>
<feature type="strand" evidence="9">
    <location>
        <begin position="5"/>
        <end position="9"/>
    </location>
</feature>
<feature type="helix" evidence="9">
    <location>
        <begin position="13"/>
        <end position="22"/>
    </location>
</feature>
<feature type="turn" evidence="9">
    <location>
        <begin position="23"/>
        <end position="25"/>
    </location>
</feature>
<feature type="strand" evidence="9">
    <location>
        <begin position="29"/>
        <end position="32"/>
    </location>
</feature>
<feature type="strand" evidence="9">
    <location>
        <begin position="34"/>
        <end position="37"/>
    </location>
</feature>
<feature type="helix" evidence="9">
    <location>
        <begin position="42"/>
        <end position="44"/>
    </location>
</feature>
<feature type="helix" evidence="9">
    <location>
        <begin position="45"/>
        <end position="50"/>
    </location>
</feature>
<feature type="helix" evidence="9">
    <location>
        <begin position="55"/>
        <end position="57"/>
    </location>
</feature>
<feature type="strand" evidence="9">
    <location>
        <begin position="59"/>
        <end position="61"/>
    </location>
</feature>
<feature type="helix" evidence="9">
    <location>
        <begin position="63"/>
        <end position="68"/>
    </location>
</feature>
<feature type="strand" evidence="9">
    <location>
        <begin position="72"/>
        <end position="74"/>
    </location>
</feature>
<feature type="strand" evidence="9">
    <location>
        <begin position="79"/>
        <end position="83"/>
    </location>
</feature>
<feature type="turn" evidence="9">
    <location>
        <begin position="84"/>
        <end position="87"/>
    </location>
</feature>
<feature type="strand" evidence="9">
    <location>
        <begin position="88"/>
        <end position="91"/>
    </location>
</feature>
<feature type="strand" evidence="9">
    <location>
        <begin position="96"/>
        <end position="98"/>
    </location>
</feature>
<feature type="strand" evidence="9">
    <location>
        <begin position="100"/>
        <end position="104"/>
    </location>
</feature>
<feature type="strand" evidence="9">
    <location>
        <begin position="108"/>
        <end position="110"/>
    </location>
</feature>
<feature type="helix" evidence="9">
    <location>
        <begin position="127"/>
        <end position="140"/>
    </location>
</feature>
<feature type="strand" evidence="9">
    <location>
        <begin position="143"/>
        <end position="146"/>
    </location>
</feature>
<feature type="helix" evidence="9">
    <location>
        <begin position="150"/>
        <end position="162"/>
    </location>
</feature>
<feature type="strand" evidence="9">
    <location>
        <begin position="166"/>
        <end position="169"/>
    </location>
</feature>
<feature type="strand" evidence="9">
    <location>
        <begin position="171"/>
        <end position="175"/>
    </location>
</feature>
<feature type="turn" evidence="9">
    <location>
        <begin position="177"/>
        <end position="179"/>
    </location>
</feature>
<feature type="helix" evidence="9">
    <location>
        <begin position="182"/>
        <end position="193"/>
    </location>
</feature>
<feature type="turn" evidence="9">
    <location>
        <begin position="194"/>
        <end position="196"/>
    </location>
</feature>
<feature type="strand" evidence="9">
    <location>
        <begin position="198"/>
        <end position="200"/>
    </location>
</feature>
<feature type="helix" evidence="9">
    <location>
        <begin position="205"/>
        <end position="207"/>
    </location>
</feature>
<feature type="helix" evidence="9">
    <location>
        <begin position="209"/>
        <end position="214"/>
    </location>
</feature>
<feature type="strand" evidence="9">
    <location>
        <begin position="215"/>
        <end position="219"/>
    </location>
</feature>
<feature type="strand" evidence="9">
    <location>
        <begin position="223"/>
        <end position="225"/>
    </location>
</feature>
<feature type="helix" evidence="9">
    <location>
        <begin position="228"/>
        <end position="230"/>
    </location>
</feature>
<feature type="strand" evidence="9">
    <location>
        <begin position="237"/>
        <end position="243"/>
    </location>
</feature>
<feature type="strand" evidence="9">
    <location>
        <begin position="254"/>
        <end position="256"/>
    </location>
</feature>
<feature type="helix" evidence="9">
    <location>
        <begin position="258"/>
        <end position="260"/>
    </location>
</feature>
<feature type="strand" evidence="9">
    <location>
        <begin position="261"/>
        <end position="263"/>
    </location>
</feature>
<feature type="helix" evidence="9">
    <location>
        <begin position="271"/>
        <end position="285"/>
    </location>
</feature>
<feature type="strand" evidence="9">
    <location>
        <begin position="300"/>
        <end position="303"/>
    </location>
</feature>
<feature type="strand" evidence="9">
    <location>
        <begin position="306"/>
        <end position="312"/>
    </location>
</feature>
<feature type="strand" evidence="9">
    <location>
        <begin position="320"/>
        <end position="326"/>
    </location>
</feature>
<feature type="strand" evidence="9">
    <location>
        <begin position="331"/>
        <end position="337"/>
    </location>
</feature>
<feature type="strand" evidence="9">
    <location>
        <begin position="340"/>
        <end position="348"/>
    </location>
</feature>
<feature type="helix" evidence="9">
    <location>
        <begin position="350"/>
        <end position="361"/>
    </location>
</feature>
<feature type="helix" evidence="9">
    <location>
        <begin position="372"/>
        <end position="376"/>
    </location>
</feature>
<keyword id="KW-0002">3D-structure</keyword>
<keyword id="KW-0216">Detoxification</keyword>
<keyword id="KW-0903">Direct protein sequencing</keyword>
<keyword id="KW-1015">Disulfide bond</keyword>
<keyword id="KW-0249">Electron transport</keyword>
<keyword id="KW-0274">FAD</keyword>
<keyword id="KW-0285">Flavoprotein</keyword>
<keyword id="KW-0520">NAD</keyword>
<keyword id="KW-0560">Oxidoreductase</keyword>
<keyword id="KW-1185">Reference proteome</keyword>
<keyword id="KW-0346">Stress response</keyword>
<keyword id="KW-0813">Transport</keyword>